<evidence type="ECO:0000250" key="1">
    <source>
        <dbReference type="UniProtKB" id="Q5BJ29"/>
    </source>
</evidence>
<evidence type="ECO:0000250" key="2">
    <source>
        <dbReference type="UniProtKB" id="Q9UJT9"/>
    </source>
</evidence>
<evidence type="ECO:0000255" key="3">
    <source>
        <dbReference type="PROSITE-ProRule" id="PRU00080"/>
    </source>
</evidence>
<evidence type="ECO:0000256" key="4">
    <source>
        <dbReference type="SAM" id="MobiDB-lite"/>
    </source>
</evidence>
<evidence type="ECO:0000305" key="5"/>
<sequence>MGANNGKQSGSEGKGSSSISSDLSSSTDQTSTKAPKNAATSEDSDLSMRTVSTPSPALILPPRSSSAVLNGSSTSSSTFGTETIAMVHMPPTSLTHPQRCLRQPRDQQGAPVDILPDHAFLQIFTHLPTNQLCRCARVCRRWYNLAWDPRLWRTIRLTGDVLHVDRALRVLTRRLCQDTPNVCLTVETVMVSGCRRLTDRGLYTVAQSCPELRRLEVAGCYNVSNEAVFEVVSRCPNLEHLDVSGCSKVTCISLTRDVSVKLSPLHGQQISIRFLDMTDCFALEDEGLHTIAAHCTQLTHLYLRRCVRLTDEGLRFLVIYCPGVRELSVSDCRFISDFGLREIAKLEGRLRYLSIAHCSRITDVGVRYVAKYCSRLRYLNARGCEGLTDHGIEHLAKSCLKLKSLDIGKCPLVSDAGLEQLALNSFNLKRLSLKSCESITGRGLQVVAANCFDLQLLNVQDCDVSLEALRFVKRHCKRCIIEHTNPAFF</sequence>
<organism>
    <name type="scientific">Danio rerio</name>
    <name type="common">Zebrafish</name>
    <name type="synonym">Brachydanio rerio</name>
    <dbReference type="NCBI Taxonomy" id="7955"/>
    <lineage>
        <taxon>Eukaryota</taxon>
        <taxon>Metazoa</taxon>
        <taxon>Chordata</taxon>
        <taxon>Craniata</taxon>
        <taxon>Vertebrata</taxon>
        <taxon>Euteleostomi</taxon>
        <taxon>Actinopterygii</taxon>
        <taxon>Neopterygii</taxon>
        <taxon>Teleostei</taxon>
        <taxon>Ostariophysi</taxon>
        <taxon>Cypriniformes</taxon>
        <taxon>Danionidae</taxon>
        <taxon>Danioninae</taxon>
        <taxon>Danio</taxon>
    </lineage>
</organism>
<dbReference type="EMBL" id="CR450710">
    <property type="status" value="NOT_ANNOTATED_CDS"/>
    <property type="molecule type" value="Genomic_DNA"/>
</dbReference>
<dbReference type="EMBL" id="BC128845">
    <property type="protein sequence ID" value="AAI28846.1"/>
    <property type="molecule type" value="mRNA"/>
</dbReference>
<dbReference type="EMBL" id="BC129207">
    <property type="protein sequence ID" value="AAI29208.1"/>
    <property type="molecule type" value="mRNA"/>
</dbReference>
<dbReference type="RefSeq" id="NP_001073511.1">
    <property type="nucleotide sequence ID" value="NM_001080042.1"/>
</dbReference>
<dbReference type="SMR" id="A1A5X2"/>
<dbReference type="FunCoup" id="A1A5X2">
    <property type="interactions" value="879"/>
</dbReference>
<dbReference type="STRING" id="7955.ENSDARP00000084255"/>
<dbReference type="PaxDb" id="7955-ENSDARP00000084255"/>
<dbReference type="PeptideAtlas" id="A1A5X2"/>
<dbReference type="Ensembl" id="ENSDART00000089822">
    <property type="protein sequence ID" value="ENSDARP00000084255"/>
    <property type="gene ID" value="ENSDARG00000062251"/>
</dbReference>
<dbReference type="GeneID" id="569430"/>
<dbReference type="KEGG" id="dre:569430"/>
<dbReference type="AGR" id="ZFIN:ZDB-GENE-061215-122"/>
<dbReference type="CTD" id="23194"/>
<dbReference type="ZFIN" id="ZDB-GENE-061215-122">
    <property type="gene designation" value="fbxl7"/>
</dbReference>
<dbReference type="eggNOG" id="KOG1947">
    <property type="taxonomic scope" value="Eukaryota"/>
</dbReference>
<dbReference type="HOGENOM" id="CLU_016072_5_0_1"/>
<dbReference type="InParanoid" id="A1A5X2"/>
<dbReference type="OMA" id="ETVHVDR"/>
<dbReference type="OrthoDB" id="423607at2759"/>
<dbReference type="PhylomeDB" id="A1A5X2"/>
<dbReference type="TreeFam" id="TF313434"/>
<dbReference type="Reactome" id="R-DRE-8854050">
    <property type="pathway name" value="FBXL7 down-regulates AURKA during mitotic entry and in early mitosis"/>
</dbReference>
<dbReference type="Reactome" id="R-DRE-8951664">
    <property type="pathway name" value="Neddylation"/>
</dbReference>
<dbReference type="Reactome" id="R-DRE-983168">
    <property type="pathway name" value="Antigen processing: Ubiquitination &amp; Proteasome degradation"/>
</dbReference>
<dbReference type="UniPathway" id="UPA00143"/>
<dbReference type="PRO" id="PR:A1A5X2"/>
<dbReference type="Proteomes" id="UP000000437">
    <property type="component" value="Chromosome 2"/>
</dbReference>
<dbReference type="Bgee" id="ENSDARG00000062251">
    <property type="expression patterns" value="Expressed in spleen and 14 other cell types or tissues"/>
</dbReference>
<dbReference type="GO" id="GO:0005813">
    <property type="term" value="C:centrosome"/>
    <property type="evidence" value="ECO:0007669"/>
    <property type="project" value="UniProtKB-SubCell"/>
</dbReference>
<dbReference type="GO" id="GO:0005737">
    <property type="term" value="C:cytoplasm"/>
    <property type="evidence" value="ECO:0007669"/>
    <property type="project" value="UniProtKB-KW"/>
</dbReference>
<dbReference type="GO" id="GO:0019005">
    <property type="term" value="C:SCF ubiquitin ligase complex"/>
    <property type="evidence" value="ECO:0000318"/>
    <property type="project" value="GO_Central"/>
</dbReference>
<dbReference type="GO" id="GO:0016567">
    <property type="term" value="P:protein ubiquitination"/>
    <property type="evidence" value="ECO:0007669"/>
    <property type="project" value="UniProtKB-UniPathway"/>
</dbReference>
<dbReference type="GO" id="GO:0031146">
    <property type="term" value="P:SCF-dependent proteasomal ubiquitin-dependent protein catabolic process"/>
    <property type="evidence" value="ECO:0000318"/>
    <property type="project" value="GO_Central"/>
</dbReference>
<dbReference type="CDD" id="cd22120">
    <property type="entry name" value="F-box_FBXL7"/>
    <property type="match status" value="1"/>
</dbReference>
<dbReference type="FunFam" id="3.80.10.10:FF:001342">
    <property type="entry name" value="F-box and leucine-rich repeat protein 7"/>
    <property type="match status" value="1"/>
</dbReference>
<dbReference type="FunFam" id="3.80.10.10:FF:000122">
    <property type="entry name" value="F-box/LRR-repeat protein 7 isoform X1"/>
    <property type="match status" value="1"/>
</dbReference>
<dbReference type="FunFam" id="1.20.1280.50:FF:000018">
    <property type="entry name" value="F-box/LRR-repeat protein 7 isoform X2"/>
    <property type="match status" value="1"/>
</dbReference>
<dbReference type="Gene3D" id="1.20.1280.50">
    <property type="match status" value="1"/>
</dbReference>
<dbReference type="Gene3D" id="3.80.10.10">
    <property type="entry name" value="Ribonuclease Inhibitor"/>
    <property type="match status" value="2"/>
</dbReference>
<dbReference type="InterPro" id="IPR036047">
    <property type="entry name" value="F-box-like_dom_sf"/>
</dbReference>
<dbReference type="InterPro" id="IPR001810">
    <property type="entry name" value="F-box_dom"/>
</dbReference>
<dbReference type="InterPro" id="IPR001611">
    <property type="entry name" value="Leu-rich_rpt"/>
</dbReference>
<dbReference type="InterPro" id="IPR006553">
    <property type="entry name" value="Leu-rich_rpt_Cys-con_subtyp"/>
</dbReference>
<dbReference type="InterPro" id="IPR032675">
    <property type="entry name" value="LRR_dom_sf"/>
</dbReference>
<dbReference type="PANTHER" id="PTHR13318:SF50">
    <property type="entry name" value="F-BOX_LRR-REPEAT PROTEIN 7"/>
    <property type="match status" value="1"/>
</dbReference>
<dbReference type="PANTHER" id="PTHR13318">
    <property type="entry name" value="PARTNER OF PAIRED, ISOFORM B-RELATED"/>
    <property type="match status" value="1"/>
</dbReference>
<dbReference type="Pfam" id="PF12937">
    <property type="entry name" value="F-box-like"/>
    <property type="match status" value="1"/>
</dbReference>
<dbReference type="Pfam" id="PF13516">
    <property type="entry name" value="LRR_6"/>
    <property type="match status" value="3"/>
</dbReference>
<dbReference type="SMART" id="SM00256">
    <property type="entry name" value="FBOX"/>
    <property type="match status" value="1"/>
</dbReference>
<dbReference type="SMART" id="SM00367">
    <property type="entry name" value="LRR_CC"/>
    <property type="match status" value="10"/>
</dbReference>
<dbReference type="SUPFAM" id="SSF81383">
    <property type="entry name" value="F-box domain"/>
    <property type="match status" value="1"/>
</dbReference>
<dbReference type="SUPFAM" id="SSF52047">
    <property type="entry name" value="RNI-like"/>
    <property type="match status" value="1"/>
</dbReference>
<dbReference type="PROSITE" id="PS50181">
    <property type="entry name" value="FBOX"/>
    <property type="match status" value="1"/>
</dbReference>
<proteinExistence type="evidence at transcript level"/>
<protein>
    <recommendedName>
        <fullName>F-box/LRR-repeat protein 7</fullName>
    </recommendedName>
    <alternativeName>
        <fullName>F-box and leucine-rich repeat protein 7</fullName>
    </alternativeName>
</protein>
<gene>
    <name type="primary">fbxl7</name>
    <name type="ORF">zgc:158346</name>
</gene>
<reference key="1">
    <citation type="journal article" date="2013" name="Nature">
        <title>The zebrafish reference genome sequence and its relationship to the human genome.</title>
        <authorList>
            <person name="Howe K."/>
            <person name="Clark M.D."/>
            <person name="Torroja C.F."/>
            <person name="Torrance J."/>
            <person name="Berthelot C."/>
            <person name="Muffato M."/>
            <person name="Collins J.E."/>
            <person name="Humphray S."/>
            <person name="McLaren K."/>
            <person name="Matthews L."/>
            <person name="McLaren S."/>
            <person name="Sealy I."/>
            <person name="Caccamo M."/>
            <person name="Churcher C."/>
            <person name="Scott C."/>
            <person name="Barrett J.C."/>
            <person name="Koch R."/>
            <person name="Rauch G.J."/>
            <person name="White S."/>
            <person name="Chow W."/>
            <person name="Kilian B."/>
            <person name="Quintais L.T."/>
            <person name="Guerra-Assuncao J.A."/>
            <person name="Zhou Y."/>
            <person name="Gu Y."/>
            <person name="Yen J."/>
            <person name="Vogel J.H."/>
            <person name="Eyre T."/>
            <person name="Redmond S."/>
            <person name="Banerjee R."/>
            <person name="Chi J."/>
            <person name="Fu B."/>
            <person name="Langley E."/>
            <person name="Maguire S.F."/>
            <person name="Laird G.K."/>
            <person name="Lloyd D."/>
            <person name="Kenyon E."/>
            <person name="Donaldson S."/>
            <person name="Sehra H."/>
            <person name="Almeida-King J."/>
            <person name="Loveland J."/>
            <person name="Trevanion S."/>
            <person name="Jones M."/>
            <person name="Quail M."/>
            <person name="Willey D."/>
            <person name="Hunt A."/>
            <person name="Burton J."/>
            <person name="Sims S."/>
            <person name="McLay K."/>
            <person name="Plumb B."/>
            <person name="Davis J."/>
            <person name="Clee C."/>
            <person name="Oliver K."/>
            <person name="Clark R."/>
            <person name="Riddle C."/>
            <person name="Elliot D."/>
            <person name="Threadgold G."/>
            <person name="Harden G."/>
            <person name="Ware D."/>
            <person name="Begum S."/>
            <person name="Mortimore B."/>
            <person name="Kerry G."/>
            <person name="Heath P."/>
            <person name="Phillimore B."/>
            <person name="Tracey A."/>
            <person name="Corby N."/>
            <person name="Dunn M."/>
            <person name="Johnson C."/>
            <person name="Wood J."/>
            <person name="Clark S."/>
            <person name="Pelan S."/>
            <person name="Griffiths G."/>
            <person name="Smith M."/>
            <person name="Glithero R."/>
            <person name="Howden P."/>
            <person name="Barker N."/>
            <person name="Lloyd C."/>
            <person name="Stevens C."/>
            <person name="Harley J."/>
            <person name="Holt K."/>
            <person name="Panagiotidis G."/>
            <person name="Lovell J."/>
            <person name="Beasley H."/>
            <person name="Henderson C."/>
            <person name="Gordon D."/>
            <person name="Auger K."/>
            <person name="Wright D."/>
            <person name="Collins J."/>
            <person name="Raisen C."/>
            <person name="Dyer L."/>
            <person name="Leung K."/>
            <person name="Robertson L."/>
            <person name="Ambridge K."/>
            <person name="Leongamornlert D."/>
            <person name="McGuire S."/>
            <person name="Gilderthorp R."/>
            <person name="Griffiths C."/>
            <person name="Manthravadi D."/>
            <person name="Nichol S."/>
            <person name="Barker G."/>
            <person name="Whitehead S."/>
            <person name="Kay M."/>
            <person name="Brown J."/>
            <person name="Murnane C."/>
            <person name="Gray E."/>
            <person name="Humphries M."/>
            <person name="Sycamore N."/>
            <person name="Barker D."/>
            <person name="Saunders D."/>
            <person name="Wallis J."/>
            <person name="Babbage A."/>
            <person name="Hammond S."/>
            <person name="Mashreghi-Mohammadi M."/>
            <person name="Barr L."/>
            <person name="Martin S."/>
            <person name="Wray P."/>
            <person name="Ellington A."/>
            <person name="Matthews N."/>
            <person name="Ellwood M."/>
            <person name="Woodmansey R."/>
            <person name="Clark G."/>
            <person name="Cooper J."/>
            <person name="Tromans A."/>
            <person name="Grafham D."/>
            <person name="Skuce C."/>
            <person name="Pandian R."/>
            <person name="Andrews R."/>
            <person name="Harrison E."/>
            <person name="Kimberley A."/>
            <person name="Garnett J."/>
            <person name="Fosker N."/>
            <person name="Hall R."/>
            <person name="Garner P."/>
            <person name="Kelly D."/>
            <person name="Bird C."/>
            <person name="Palmer S."/>
            <person name="Gehring I."/>
            <person name="Berger A."/>
            <person name="Dooley C.M."/>
            <person name="Ersan-Urun Z."/>
            <person name="Eser C."/>
            <person name="Geiger H."/>
            <person name="Geisler M."/>
            <person name="Karotki L."/>
            <person name="Kirn A."/>
            <person name="Konantz J."/>
            <person name="Konantz M."/>
            <person name="Oberlander M."/>
            <person name="Rudolph-Geiger S."/>
            <person name="Teucke M."/>
            <person name="Lanz C."/>
            <person name="Raddatz G."/>
            <person name="Osoegawa K."/>
            <person name="Zhu B."/>
            <person name="Rapp A."/>
            <person name="Widaa S."/>
            <person name="Langford C."/>
            <person name="Yang F."/>
            <person name="Schuster S.C."/>
            <person name="Carter N.P."/>
            <person name="Harrow J."/>
            <person name="Ning Z."/>
            <person name="Herrero J."/>
            <person name="Searle S.M."/>
            <person name="Enright A."/>
            <person name="Geisler R."/>
            <person name="Plasterk R.H."/>
            <person name="Lee C."/>
            <person name="Westerfield M."/>
            <person name="de Jong P.J."/>
            <person name="Zon L.I."/>
            <person name="Postlethwait J.H."/>
            <person name="Nusslein-Volhard C."/>
            <person name="Hubbard T.J."/>
            <person name="Roest Crollius H."/>
            <person name="Rogers J."/>
            <person name="Stemple D.L."/>
        </authorList>
    </citation>
    <scope>NUCLEOTIDE SEQUENCE [LARGE SCALE GENOMIC DNA]</scope>
    <source>
        <strain>Tuebingen</strain>
    </source>
</reference>
<reference key="2">
    <citation type="submission" date="2006-12" db="EMBL/GenBank/DDBJ databases">
        <authorList>
            <consortium name="NIH - Zebrafish Gene Collection (ZGC) project"/>
        </authorList>
    </citation>
    <scope>NUCLEOTIDE SEQUENCE [LARGE SCALE MRNA]</scope>
    <source>
        <tissue>Embryo</tissue>
    </source>
</reference>
<name>FBXL7_DANRE</name>
<comment type="function">
    <text evidence="2">Substrate recognition component of a SCF (SKP1-CUL1-F-box protein) E3 ubiquitin-protein ligase complex which mediates the ubiquitination and subsequent proteasomal degradation of target proteins.</text>
</comment>
<comment type="pathway">
    <text evidence="2">Protein modification; protein ubiquitination.</text>
</comment>
<comment type="subunit">
    <text evidence="1">Part of the SCF (SKP1-CUL1-F-box) E3 ubiquitin-protein ligase complex SCF(FBXL7).</text>
</comment>
<comment type="subcellular location">
    <subcellularLocation>
        <location evidence="1">Cytoplasm</location>
        <location evidence="1">Cytoskeleton</location>
        <location evidence="1">Microtubule organizing center</location>
        <location evidence="1">Centrosome</location>
    </subcellularLocation>
    <text evidence="1">Localizes to the centrosome during spindle formation.</text>
</comment>
<comment type="similarity">
    <text evidence="5">Belongs to the FBXL7 family.</text>
</comment>
<feature type="chain" id="PRO_0000417991" description="F-box/LRR-repeat protein 7">
    <location>
        <begin position="1"/>
        <end position="489"/>
    </location>
</feature>
<feature type="domain" description="F-box" evidence="3">
    <location>
        <begin position="109"/>
        <end position="155"/>
    </location>
</feature>
<feature type="repeat" description="LRR 1">
    <location>
        <begin position="168"/>
        <end position="193"/>
    </location>
</feature>
<feature type="repeat" description="LRR 2">
    <location>
        <begin position="194"/>
        <end position="219"/>
    </location>
</feature>
<feature type="repeat" description="LRR 3">
    <location>
        <begin position="220"/>
        <end position="245"/>
    </location>
</feature>
<feature type="repeat" description="LRR 4">
    <location>
        <begin position="251"/>
        <end position="279"/>
    </location>
</feature>
<feature type="repeat" description="LRR 5">
    <location>
        <begin position="280"/>
        <end position="305"/>
    </location>
</feature>
<feature type="repeat" description="LRR 6">
    <location>
        <begin position="306"/>
        <end position="331"/>
    </location>
</feature>
<feature type="repeat" description="LRR 7">
    <location>
        <begin position="332"/>
        <end position="357"/>
    </location>
</feature>
<feature type="repeat" description="LRR 8">
    <location>
        <begin position="358"/>
        <end position="383"/>
    </location>
</feature>
<feature type="repeat" description="LRR 9">
    <location>
        <begin position="384"/>
        <end position="409"/>
    </location>
</feature>
<feature type="repeat" description="LRR 10">
    <location>
        <begin position="410"/>
        <end position="435"/>
    </location>
</feature>
<feature type="repeat" description="LRR 11">
    <location>
        <begin position="436"/>
        <end position="461"/>
    </location>
</feature>
<feature type="region of interest" description="Disordered" evidence="4">
    <location>
        <begin position="1"/>
        <end position="76"/>
    </location>
</feature>
<feature type="compositionally biased region" description="Low complexity" evidence="4">
    <location>
        <begin position="1"/>
        <end position="31"/>
    </location>
</feature>
<feature type="compositionally biased region" description="Polar residues" evidence="4">
    <location>
        <begin position="32"/>
        <end position="55"/>
    </location>
</feature>
<feature type="compositionally biased region" description="Low complexity" evidence="4">
    <location>
        <begin position="64"/>
        <end position="76"/>
    </location>
</feature>
<keyword id="KW-0963">Cytoplasm</keyword>
<keyword id="KW-0206">Cytoskeleton</keyword>
<keyword id="KW-0433">Leucine-rich repeat</keyword>
<keyword id="KW-1185">Reference proteome</keyword>
<keyword id="KW-0677">Repeat</keyword>
<keyword id="KW-0833">Ubl conjugation pathway</keyword>
<accession>A1A5X2</accession>